<accession>P51781</accession>
<organism>
    <name type="scientific">Sus scrofa</name>
    <name type="common">Pig</name>
    <dbReference type="NCBI Taxonomy" id="9823"/>
    <lineage>
        <taxon>Eukaryota</taxon>
        <taxon>Metazoa</taxon>
        <taxon>Chordata</taxon>
        <taxon>Craniata</taxon>
        <taxon>Vertebrata</taxon>
        <taxon>Euteleostomi</taxon>
        <taxon>Mammalia</taxon>
        <taxon>Eutheria</taxon>
        <taxon>Laurasiatheria</taxon>
        <taxon>Artiodactyla</taxon>
        <taxon>Suina</taxon>
        <taxon>Suidae</taxon>
        <taxon>Sus</taxon>
    </lineage>
</organism>
<proteinExistence type="evidence at transcript level"/>
<name>GSTA1_PIG</name>
<sequence length="222" mass="25281">MAGKPILHYFNGRGRMECIRWLLAAAGVEFEEKFIKTPEDLDKLTNDGSLLFQQVPMVEIDGMKLVQTRAILNYIATKYNLYGKDAKERALIDMYTEGVADLGEMILLLPLCPPNEKDAKVASIKEKSTNRYLPAFEKVLKSHGQDYLVGNKLSRADIQLVELLYYVEELDPSLLANFPLLKALKTRVSNLPTVKKFLQPGSQRKPPMDAKKIRRSQEYFPD</sequence>
<protein>
    <recommendedName>
        <fullName>Glutathione S-transferase alpha M14</fullName>
        <ecNumber evidence="2">2.5.1.18</ecNumber>
    </recommendedName>
    <alternativeName>
        <fullName>GST class-alpha</fullName>
    </alternativeName>
    <component>
        <recommendedName>
            <fullName>Glutathione S-transferase alpha M14, N-terminally processed</fullName>
        </recommendedName>
    </component>
</protein>
<reference key="1">
    <citation type="submission" date="1996-02" db="EMBL/GenBank/DDBJ databases">
        <authorList>
            <person name="Hatey F."/>
            <person name="Tosser G."/>
        </authorList>
    </citation>
    <scope>NUCLEOTIDE SEQUENCE [MRNA]</scope>
    <source>
        <tissue>Ovary</tissue>
    </source>
</reference>
<evidence type="ECO:0000250" key="1"/>
<evidence type="ECO:0000250" key="2">
    <source>
        <dbReference type="UniProtKB" id="P08263"/>
    </source>
</evidence>
<evidence type="ECO:0000250" key="3">
    <source>
        <dbReference type="UniProtKB" id="P13745"/>
    </source>
</evidence>
<evidence type="ECO:0000250" key="4">
    <source>
        <dbReference type="UniProtKB" id="P30115"/>
    </source>
</evidence>
<evidence type="ECO:0000250" key="5">
    <source>
        <dbReference type="UniProtKB" id="P30711"/>
    </source>
</evidence>
<evidence type="ECO:0000250" key="6">
    <source>
        <dbReference type="UniProtKB" id="P80894"/>
    </source>
</evidence>
<evidence type="ECO:0000256" key="7">
    <source>
        <dbReference type="SAM" id="MobiDB-lite"/>
    </source>
</evidence>
<evidence type="ECO:0000305" key="8"/>
<feature type="chain" id="PRO_0000421782" description="Glutathione S-transferase alpha M14">
    <location>
        <begin position="1"/>
        <end position="222"/>
    </location>
</feature>
<feature type="initiator methionine" description="Removed; alternate" evidence="4">
    <location>
        <position position="1"/>
    </location>
</feature>
<feature type="chain" id="PRO_0000185797" description="Glutathione S-transferase alpha M14, N-terminally processed">
    <location>
        <begin position="2"/>
        <end position="222"/>
    </location>
</feature>
<feature type="domain" description="GST N-terminal">
    <location>
        <begin position="3"/>
        <end position="83"/>
    </location>
</feature>
<feature type="domain" description="GST C-terminal">
    <location>
        <begin position="85"/>
        <end position="208"/>
    </location>
</feature>
<feature type="region of interest" description="Disordered" evidence="7">
    <location>
        <begin position="199"/>
        <end position="222"/>
    </location>
</feature>
<feature type="compositionally biased region" description="Basic and acidic residues" evidence="7">
    <location>
        <begin position="206"/>
        <end position="222"/>
    </location>
</feature>
<feature type="binding site" evidence="3">
    <location>
        <position position="9"/>
    </location>
    <ligand>
        <name>glutathione</name>
        <dbReference type="ChEBI" id="CHEBI:57925"/>
    </ligand>
</feature>
<feature type="binding site" evidence="5">
    <location>
        <begin position="54"/>
        <end position="55"/>
    </location>
    <ligand>
        <name>glutathione</name>
        <dbReference type="ChEBI" id="CHEBI:57925"/>
    </ligand>
</feature>
<feature type="binding site" evidence="3">
    <location>
        <begin position="67"/>
        <end position="68"/>
    </location>
    <ligand>
        <name>glutathione</name>
        <dbReference type="ChEBI" id="CHEBI:57925"/>
    </ligand>
</feature>
<feature type="modified residue" description="N-acetylmethionine" evidence="6">
    <location>
        <position position="1"/>
    </location>
</feature>
<feature type="modified residue" description="N-acetylalanine; in Glutathione S-transferase alpha M14, N-terminally processed" evidence="4">
    <location>
        <position position="2"/>
    </location>
</feature>
<feature type="modified residue" description="N6-succinyllysine" evidence="4">
    <location>
        <position position="4"/>
    </location>
</feature>
<comment type="function">
    <text evidence="2">Glutathione S-transferase that catalyzes the nucleophilic attack of the sulfur atom of glutathione on the electrophilic groups of a wide range of exogenous and endogenous compounds. Involved in the formation of glutathione conjugates of both prostaglandin A2 (PGA2) and prostaglandin J2 (PGJ2). It also catalyzes the isomerization of D5-androstene-3,17-dione (AD) into D4-androstene-3,17-dione and may therefore play an important role in hormone biosynthesis. Through its glutathione-dependent peroxidase activity toward the fatty acid hydroperoxide (13S)-hydroperoxy-(9Z,11E)-octadecadienoate/13-HPODE it is also involved in the metabolism of oxidized linoleic acid.</text>
</comment>
<comment type="catalytic activity">
    <reaction evidence="2">
        <text>RX + glutathione = an S-substituted glutathione + a halide anion + H(+)</text>
        <dbReference type="Rhea" id="RHEA:16437"/>
        <dbReference type="ChEBI" id="CHEBI:15378"/>
        <dbReference type="ChEBI" id="CHEBI:16042"/>
        <dbReference type="ChEBI" id="CHEBI:17792"/>
        <dbReference type="ChEBI" id="CHEBI:57925"/>
        <dbReference type="ChEBI" id="CHEBI:90779"/>
        <dbReference type="EC" id="2.5.1.18"/>
    </reaction>
    <physiologicalReaction direction="left-to-right" evidence="2">
        <dbReference type="Rhea" id="RHEA:16438"/>
    </physiologicalReaction>
</comment>
<comment type="catalytic activity">
    <reaction evidence="2">
        <text>prostaglandin A2 + glutathione = prostaglandin A2-S-(R)-glutathione</text>
        <dbReference type="Rhea" id="RHEA:50796"/>
        <dbReference type="ChEBI" id="CHEBI:57925"/>
        <dbReference type="ChEBI" id="CHEBI:133370"/>
        <dbReference type="ChEBI" id="CHEBI:133768"/>
    </reaction>
    <physiologicalReaction direction="left-to-right" evidence="2">
        <dbReference type="Rhea" id="RHEA:50797"/>
    </physiologicalReaction>
</comment>
<comment type="catalytic activity">
    <reaction evidence="2">
        <text>prostaglandin J2 + glutathione = prostaglandin J2-S-(R)-glutathione</text>
        <dbReference type="Rhea" id="RHEA:50804"/>
        <dbReference type="ChEBI" id="CHEBI:57925"/>
        <dbReference type="ChEBI" id="CHEBI:133396"/>
        <dbReference type="ChEBI" id="CHEBI:133771"/>
    </reaction>
    <physiologicalReaction direction="left-to-right" evidence="2">
        <dbReference type="Rhea" id="RHEA:50805"/>
    </physiologicalReaction>
</comment>
<comment type="catalytic activity">
    <reaction evidence="2">
        <text>(13S)-hydroperoxy-(9Z,11E)-octadecadienoate + 2 glutathione = (13S)-hydroxy-(9Z,11E)-octadecadienoate + glutathione disulfide + H2O</text>
        <dbReference type="Rhea" id="RHEA:48888"/>
        <dbReference type="ChEBI" id="CHEBI:15377"/>
        <dbReference type="ChEBI" id="CHEBI:57466"/>
        <dbReference type="ChEBI" id="CHEBI:57925"/>
        <dbReference type="ChEBI" id="CHEBI:58297"/>
        <dbReference type="ChEBI" id="CHEBI:90850"/>
    </reaction>
    <physiologicalReaction direction="left-to-right" evidence="2">
        <dbReference type="Rhea" id="RHEA:48889"/>
    </physiologicalReaction>
</comment>
<comment type="catalytic activity">
    <reaction evidence="2">
        <text>androst-5-ene-3,17-dione = androst-4-ene-3,17-dione</text>
        <dbReference type="Rhea" id="RHEA:43936"/>
        <dbReference type="ChEBI" id="CHEBI:16422"/>
        <dbReference type="ChEBI" id="CHEBI:83865"/>
    </reaction>
    <physiologicalReaction direction="left-to-right" evidence="2">
        <dbReference type="Rhea" id="RHEA:43937"/>
    </physiologicalReaction>
</comment>
<comment type="subunit">
    <text evidence="2">Homodimer or heterodimer of GSTA1 and GSTA2.</text>
</comment>
<comment type="subcellular location">
    <subcellularLocation>
        <location evidence="1">Cytoplasm</location>
    </subcellularLocation>
</comment>
<comment type="similarity">
    <text evidence="8">Belongs to the GST superfamily. Alpha family.</text>
</comment>
<dbReference type="EC" id="2.5.1.18" evidence="2"/>
<dbReference type="EMBL" id="Z69585">
    <property type="protein sequence ID" value="CAA93433.1"/>
    <property type="molecule type" value="mRNA"/>
</dbReference>
<dbReference type="RefSeq" id="NP_999554.1">
    <property type="nucleotide sequence ID" value="NM_214389.1"/>
</dbReference>
<dbReference type="SMR" id="P51781"/>
<dbReference type="FunCoup" id="P51781">
    <property type="interactions" value="135"/>
</dbReference>
<dbReference type="STRING" id="9823.ENSSSCP00000002835"/>
<dbReference type="PaxDb" id="9823-ENSSSCP00000002831"/>
<dbReference type="PeptideAtlas" id="P51781"/>
<dbReference type="GeneID" id="397682"/>
<dbReference type="KEGG" id="ssc:397682"/>
<dbReference type="CTD" id="2938"/>
<dbReference type="eggNOG" id="KOG1695">
    <property type="taxonomic scope" value="Eukaryota"/>
</dbReference>
<dbReference type="InParanoid" id="P51781"/>
<dbReference type="OrthoDB" id="414243at2759"/>
<dbReference type="BRENDA" id="2.5.1.18">
    <property type="organism ID" value="6170"/>
</dbReference>
<dbReference type="Proteomes" id="UP000008227">
    <property type="component" value="Unplaced"/>
</dbReference>
<dbReference type="Proteomes" id="UP000314985">
    <property type="component" value="Unplaced"/>
</dbReference>
<dbReference type="Proteomes" id="UP000694570">
    <property type="component" value="Unplaced"/>
</dbReference>
<dbReference type="Proteomes" id="UP000694571">
    <property type="component" value="Unplaced"/>
</dbReference>
<dbReference type="Proteomes" id="UP000694720">
    <property type="component" value="Unplaced"/>
</dbReference>
<dbReference type="Proteomes" id="UP000694722">
    <property type="component" value="Unplaced"/>
</dbReference>
<dbReference type="Proteomes" id="UP000694723">
    <property type="component" value="Unplaced"/>
</dbReference>
<dbReference type="Proteomes" id="UP000694724">
    <property type="component" value="Unplaced"/>
</dbReference>
<dbReference type="Proteomes" id="UP000694725">
    <property type="component" value="Unplaced"/>
</dbReference>
<dbReference type="Proteomes" id="UP000694726">
    <property type="component" value="Unplaced"/>
</dbReference>
<dbReference type="Proteomes" id="UP000694727">
    <property type="component" value="Unplaced"/>
</dbReference>
<dbReference type="Proteomes" id="UP000694728">
    <property type="component" value="Unplaced"/>
</dbReference>
<dbReference type="GO" id="GO:0005829">
    <property type="term" value="C:cytosol"/>
    <property type="evidence" value="ECO:0000318"/>
    <property type="project" value="GO_Central"/>
</dbReference>
<dbReference type="GO" id="GO:0004364">
    <property type="term" value="F:glutathione transferase activity"/>
    <property type="evidence" value="ECO:0000250"/>
    <property type="project" value="UniProtKB"/>
</dbReference>
<dbReference type="GO" id="GO:0006749">
    <property type="term" value="P:glutathione metabolic process"/>
    <property type="evidence" value="ECO:0000250"/>
    <property type="project" value="UniProtKB"/>
</dbReference>
<dbReference type="GO" id="GO:0006805">
    <property type="term" value="P:xenobiotic metabolic process"/>
    <property type="evidence" value="ECO:0000318"/>
    <property type="project" value="GO_Central"/>
</dbReference>
<dbReference type="CDD" id="cd03208">
    <property type="entry name" value="GST_C_Alpha"/>
    <property type="match status" value="1"/>
</dbReference>
<dbReference type="CDD" id="cd03077">
    <property type="entry name" value="GST_N_Alpha"/>
    <property type="match status" value="1"/>
</dbReference>
<dbReference type="FunFam" id="1.20.1050.10:FF:000005">
    <property type="entry name" value="Glutathione S-transferase A1"/>
    <property type="match status" value="1"/>
</dbReference>
<dbReference type="Gene3D" id="1.20.1050.10">
    <property type="match status" value="1"/>
</dbReference>
<dbReference type="Gene3D" id="3.40.30.10">
    <property type="entry name" value="Glutaredoxin"/>
    <property type="match status" value="1"/>
</dbReference>
<dbReference type="InterPro" id="IPR010987">
    <property type="entry name" value="Glutathione-S-Trfase_C-like"/>
</dbReference>
<dbReference type="InterPro" id="IPR036282">
    <property type="entry name" value="Glutathione-S-Trfase_C_sf"/>
</dbReference>
<dbReference type="InterPro" id="IPR004045">
    <property type="entry name" value="Glutathione_S-Trfase_N"/>
</dbReference>
<dbReference type="InterPro" id="IPR003080">
    <property type="entry name" value="GST_alpha"/>
</dbReference>
<dbReference type="InterPro" id="IPR004046">
    <property type="entry name" value="GST_C"/>
</dbReference>
<dbReference type="InterPro" id="IPR050213">
    <property type="entry name" value="GST_superfamily"/>
</dbReference>
<dbReference type="InterPro" id="IPR036249">
    <property type="entry name" value="Thioredoxin-like_sf"/>
</dbReference>
<dbReference type="PANTHER" id="PTHR11571">
    <property type="entry name" value="GLUTATHIONE S-TRANSFERASE"/>
    <property type="match status" value="1"/>
</dbReference>
<dbReference type="PANTHER" id="PTHR11571:SF107">
    <property type="entry name" value="GLUTATHIONE S-TRANSFERASE A1"/>
    <property type="match status" value="1"/>
</dbReference>
<dbReference type="Pfam" id="PF00043">
    <property type="entry name" value="GST_C"/>
    <property type="match status" value="1"/>
</dbReference>
<dbReference type="Pfam" id="PF02798">
    <property type="entry name" value="GST_N"/>
    <property type="match status" value="1"/>
</dbReference>
<dbReference type="PRINTS" id="PR01266">
    <property type="entry name" value="GSTRNSFRASEA"/>
</dbReference>
<dbReference type="SFLD" id="SFLDG01205">
    <property type="entry name" value="AMPS.1"/>
    <property type="match status" value="1"/>
</dbReference>
<dbReference type="SFLD" id="SFLDG00363">
    <property type="entry name" value="AMPS_(cytGST):_Alpha-__Mu-__Pi"/>
    <property type="match status" value="1"/>
</dbReference>
<dbReference type="SUPFAM" id="SSF47616">
    <property type="entry name" value="GST C-terminal domain-like"/>
    <property type="match status" value="1"/>
</dbReference>
<dbReference type="SUPFAM" id="SSF52833">
    <property type="entry name" value="Thioredoxin-like"/>
    <property type="match status" value="1"/>
</dbReference>
<dbReference type="PROSITE" id="PS50405">
    <property type="entry name" value="GST_CTER"/>
    <property type="match status" value="1"/>
</dbReference>
<dbReference type="PROSITE" id="PS50404">
    <property type="entry name" value="GST_NTER"/>
    <property type="match status" value="1"/>
</dbReference>
<keyword id="KW-0007">Acetylation</keyword>
<keyword id="KW-0963">Cytoplasm</keyword>
<keyword id="KW-1185">Reference proteome</keyword>
<keyword id="KW-0808">Transferase</keyword>